<organism>
    <name type="scientific">Acetivibrio thermocellus (strain ATCC 27405 / DSM 1237 / JCM 9322 / NBRC 103400 / NCIMB 10682 / NRRL B-4536 / VPI 7372)</name>
    <name type="common">Clostridium thermocellum</name>
    <dbReference type="NCBI Taxonomy" id="203119"/>
    <lineage>
        <taxon>Bacteria</taxon>
        <taxon>Bacillati</taxon>
        <taxon>Bacillota</taxon>
        <taxon>Clostridia</taxon>
        <taxon>Eubacteriales</taxon>
        <taxon>Oscillospiraceae</taxon>
        <taxon>Acetivibrio</taxon>
    </lineage>
</organism>
<name>QUEC_ACET2</name>
<feature type="chain" id="PRO_0000336910" description="7-cyano-7-deazaguanine synthase">
    <location>
        <begin position="1"/>
        <end position="222"/>
    </location>
</feature>
<feature type="binding site" evidence="1">
    <location>
        <begin position="8"/>
        <end position="18"/>
    </location>
    <ligand>
        <name>ATP</name>
        <dbReference type="ChEBI" id="CHEBI:30616"/>
    </ligand>
</feature>
<feature type="binding site" evidence="1">
    <location>
        <position position="186"/>
    </location>
    <ligand>
        <name>Zn(2+)</name>
        <dbReference type="ChEBI" id="CHEBI:29105"/>
    </ligand>
</feature>
<feature type="binding site" evidence="1">
    <location>
        <position position="194"/>
    </location>
    <ligand>
        <name>Zn(2+)</name>
        <dbReference type="ChEBI" id="CHEBI:29105"/>
    </ligand>
</feature>
<feature type="binding site" evidence="1">
    <location>
        <position position="197"/>
    </location>
    <ligand>
        <name>Zn(2+)</name>
        <dbReference type="ChEBI" id="CHEBI:29105"/>
    </ligand>
</feature>
<feature type="binding site" evidence="1">
    <location>
        <position position="200"/>
    </location>
    <ligand>
        <name>Zn(2+)</name>
        <dbReference type="ChEBI" id="CHEBI:29105"/>
    </ligand>
</feature>
<sequence length="222" mass="24255">MRRAVVLLSGGLDSTTCLSVALAEGYEVYPLSFDYGQRNRKELESAKQVVKYFKLKEHKIVKIGNVGGSALTDMNIDVPDYKGLPTIPVTYVPARNIIFLSYAVGYAEVVDAEAIFIGVNAVDYSGYPDCRPEFIEAFQKAINLGTKSGVNGKPVKIITPLINLSKAEIIKLACENNAPLHLTTTCYRGGEKACGVCDSCVLRLKGFKEAGIVDTIEYMERT</sequence>
<protein>
    <recommendedName>
        <fullName evidence="1">7-cyano-7-deazaguanine synthase</fullName>
        <ecNumber evidence="1">6.3.4.20</ecNumber>
    </recommendedName>
    <alternativeName>
        <fullName evidence="1">7-cyano-7-carbaguanine synthase</fullName>
    </alternativeName>
    <alternativeName>
        <fullName evidence="1">PreQ(0) synthase</fullName>
    </alternativeName>
    <alternativeName>
        <fullName evidence="1">Queuosine biosynthesis protein QueC</fullName>
    </alternativeName>
</protein>
<proteinExistence type="inferred from homology"/>
<gene>
    <name evidence="1" type="primary">queC</name>
    <name type="ordered locus">Cthe_3105</name>
</gene>
<dbReference type="EC" id="6.3.4.20" evidence="1"/>
<dbReference type="EMBL" id="CP000568">
    <property type="protein sequence ID" value="ABN54300.1"/>
    <property type="molecule type" value="Genomic_DNA"/>
</dbReference>
<dbReference type="RefSeq" id="WP_003511610.1">
    <property type="nucleotide sequence ID" value="NC_009012.1"/>
</dbReference>
<dbReference type="SMR" id="A3DK21"/>
<dbReference type="STRING" id="203119.Cthe_3105"/>
<dbReference type="GeneID" id="35803932"/>
<dbReference type="KEGG" id="cth:Cthe_3105"/>
<dbReference type="eggNOG" id="COG0603">
    <property type="taxonomic scope" value="Bacteria"/>
</dbReference>
<dbReference type="HOGENOM" id="CLU_081854_1_0_9"/>
<dbReference type="OrthoDB" id="9789567at2"/>
<dbReference type="UniPathway" id="UPA00391"/>
<dbReference type="Proteomes" id="UP000002145">
    <property type="component" value="Chromosome"/>
</dbReference>
<dbReference type="GO" id="GO:0005524">
    <property type="term" value="F:ATP binding"/>
    <property type="evidence" value="ECO:0007669"/>
    <property type="project" value="UniProtKB-UniRule"/>
</dbReference>
<dbReference type="GO" id="GO:0016879">
    <property type="term" value="F:ligase activity, forming carbon-nitrogen bonds"/>
    <property type="evidence" value="ECO:0007669"/>
    <property type="project" value="UniProtKB-UniRule"/>
</dbReference>
<dbReference type="GO" id="GO:0008270">
    <property type="term" value="F:zinc ion binding"/>
    <property type="evidence" value="ECO:0007669"/>
    <property type="project" value="UniProtKB-UniRule"/>
</dbReference>
<dbReference type="GO" id="GO:0008616">
    <property type="term" value="P:queuosine biosynthetic process"/>
    <property type="evidence" value="ECO:0007669"/>
    <property type="project" value="UniProtKB-UniRule"/>
</dbReference>
<dbReference type="CDD" id="cd01995">
    <property type="entry name" value="QueC-like"/>
    <property type="match status" value="1"/>
</dbReference>
<dbReference type="Gene3D" id="3.40.50.620">
    <property type="entry name" value="HUPs"/>
    <property type="match status" value="1"/>
</dbReference>
<dbReference type="HAMAP" id="MF_01633">
    <property type="entry name" value="QueC"/>
    <property type="match status" value="1"/>
</dbReference>
<dbReference type="InterPro" id="IPR018317">
    <property type="entry name" value="QueC"/>
</dbReference>
<dbReference type="InterPro" id="IPR014729">
    <property type="entry name" value="Rossmann-like_a/b/a_fold"/>
</dbReference>
<dbReference type="NCBIfam" id="TIGR00364">
    <property type="entry name" value="7-cyano-7-deazaguanine synthase QueC"/>
    <property type="match status" value="1"/>
</dbReference>
<dbReference type="PANTHER" id="PTHR42914">
    <property type="entry name" value="7-CYANO-7-DEAZAGUANINE SYNTHASE"/>
    <property type="match status" value="1"/>
</dbReference>
<dbReference type="PANTHER" id="PTHR42914:SF1">
    <property type="entry name" value="7-CYANO-7-DEAZAGUANINE SYNTHASE"/>
    <property type="match status" value="1"/>
</dbReference>
<dbReference type="Pfam" id="PF06508">
    <property type="entry name" value="QueC"/>
    <property type="match status" value="1"/>
</dbReference>
<dbReference type="PIRSF" id="PIRSF006293">
    <property type="entry name" value="ExsB"/>
    <property type="match status" value="1"/>
</dbReference>
<dbReference type="SUPFAM" id="SSF52402">
    <property type="entry name" value="Adenine nucleotide alpha hydrolases-like"/>
    <property type="match status" value="1"/>
</dbReference>
<reference key="1">
    <citation type="submission" date="2007-02" db="EMBL/GenBank/DDBJ databases">
        <title>Complete sequence of Clostridium thermocellum ATCC 27405.</title>
        <authorList>
            <consortium name="US DOE Joint Genome Institute"/>
            <person name="Copeland A."/>
            <person name="Lucas S."/>
            <person name="Lapidus A."/>
            <person name="Barry K."/>
            <person name="Detter J.C."/>
            <person name="Glavina del Rio T."/>
            <person name="Hammon N."/>
            <person name="Israni S."/>
            <person name="Dalin E."/>
            <person name="Tice H."/>
            <person name="Pitluck S."/>
            <person name="Chertkov O."/>
            <person name="Brettin T."/>
            <person name="Bruce D."/>
            <person name="Han C."/>
            <person name="Tapia R."/>
            <person name="Gilna P."/>
            <person name="Schmutz J."/>
            <person name="Larimer F."/>
            <person name="Land M."/>
            <person name="Hauser L."/>
            <person name="Kyrpides N."/>
            <person name="Mikhailova N."/>
            <person name="Wu J.H.D."/>
            <person name="Newcomb M."/>
            <person name="Richardson P."/>
        </authorList>
    </citation>
    <scope>NUCLEOTIDE SEQUENCE [LARGE SCALE GENOMIC DNA]</scope>
    <source>
        <strain>ATCC 27405 / DSM 1237 / JCM 9322 / NBRC 103400 / NCIMB 10682 / NRRL B-4536 / VPI 7372</strain>
    </source>
</reference>
<accession>A3DK21</accession>
<evidence type="ECO:0000255" key="1">
    <source>
        <dbReference type="HAMAP-Rule" id="MF_01633"/>
    </source>
</evidence>
<comment type="function">
    <text evidence="1">Catalyzes the ATP-dependent conversion of 7-carboxy-7-deazaguanine (CDG) to 7-cyano-7-deazaguanine (preQ(0)).</text>
</comment>
<comment type="catalytic activity">
    <reaction evidence="1">
        <text>7-carboxy-7-deazaguanine + NH4(+) + ATP = 7-cyano-7-deazaguanine + ADP + phosphate + H2O + H(+)</text>
        <dbReference type="Rhea" id="RHEA:27982"/>
        <dbReference type="ChEBI" id="CHEBI:15377"/>
        <dbReference type="ChEBI" id="CHEBI:15378"/>
        <dbReference type="ChEBI" id="CHEBI:28938"/>
        <dbReference type="ChEBI" id="CHEBI:30616"/>
        <dbReference type="ChEBI" id="CHEBI:43474"/>
        <dbReference type="ChEBI" id="CHEBI:45075"/>
        <dbReference type="ChEBI" id="CHEBI:61036"/>
        <dbReference type="ChEBI" id="CHEBI:456216"/>
        <dbReference type="EC" id="6.3.4.20"/>
    </reaction>
</comment>
<comment type="cofactor">
    <cofactor evidence="1">
        <name>Zn(2+)</name>
        <dbReference type="ChEBI" id="CHEBI:29105"/>
    </cofactor>
    <text evidence="1">Binds 1 zinc ion per subunit.</text>
</comment>
<comment type="pathway">
    <text evidence="1">Purine metabolism; 7-cyano-7-deazaguanine biosynthesis.</text>
</comment>
<comment type="subunit">
    <text evidence="1">Homodimer.</text>
</comment>
<comment type="similarity">
    <text evidence="1">Belongs to the QueC family.</text>
</comment>
<keyword id="KW-0067">ATP-binding</keyword>
<keyword id="KW-0436">Ligase</keyword>
<keyword id="KW-0479">Metal-binding</keyword>
<keyword id="KW-0547">Nucleotide-binding</keyword>
<keyword id="KW-0671">Queuosine biosynthesis</keyword>
<keyword id="KW-1185">Reference proteome</keyword>
<keyword id="KW-0862">Zinc</keyword>